<gene>
    <name evidence="1" type="primary">acpP</name>
    <name type="ordered locus">Vapar_1392</name>
</gene>
<sequence>MSDIEARVKKIIAEQLGVEESQVTNEKAFVADLGADSLDTVELVMALEDEFGIEIPDEDAEKITTVQNAVDYATKNQKA</sequence>
<protein>
    <recommendedName>
        <fullName evidence="1">Acyl carrier protein</fullName>
        <shortName evidence="1">ACP</shortName>
    </recommendedName>
</protein>
<organism>
    <name type="scientific">Variovorax paradoxus (strain S110)</name>
    <dbReference type="NCBI Taxonomy" id="543728"/>
    <lineage>
        <taxon>Bacteria</taxon>
        <taxon>Pseudomonadati</taxon>
        <taxon>Pseudomonadota</taxon>
        <taxon>Betaproteobacteria</taxon>
        <taxon>Burkholderiales</taxon>
        <taxon>Comamonadaceae</taxon>
        <taxon>Variovorax</taxon>
    </lineage>
</organism>
<accession>C5CSE5</accession>
<proteinExistence type="inferred from homology"/>
<reference key="1">
    <citation type="journal article" date="2011" name="J. Bacteriol.">
        <title>Complete genome sequence of the metabolically versatile plant growth-promoting endophyte, Variovorax paradoxus S110.</title>
        <authorList>
            <person name="Han J.I."/>
            <person name="Choi H.K."/>
            <person name="Lee S.W."/>
            <person name="Orwin P.M."/>
            <person name="Kim J."/>
            <person name="Laroe S.L."/>
            <person name="Kim T.G."/>
            <person name="O'Neil J."/>
            <person name="Leadbetter J.R."/>
            <person name="Lee S.Y."/>
            <person name="Hur C.G."/>
            <person name="Spain J.C."/>
            <person name="Ovchinnikova G."/>
            <person name="Goodwin L."/>
            <person name="Han C."/>
        </authorList>
    </citation>
    <scope>NUCLEOTIDE SEQUENCE [LARGE SCALE GENOMIC DNA]</scope>
    <source>
        <strain>S110</strain>
    </source>
</reference>
<dbReference type="EMBL" id="CP001635">
    <property type="protein sequence ID" value="ACS18043.1"/>
    <property type="molecule type" value="Genomic_DNA"/>
</dbReference>
<dbReference type="SMR" id="C5CSE5"/>
<dbReference type="STRING" id="543728.Vapar_1392"/>
<dbReference type="KEGG" id="vap:Vapar_1392"/>
<dbReference type="eggNOG" id="COG0236">
    <property type="taxonomic scope" value="Bacteria"/>
</dbReference>
<dbReference type="HOGENOM" id="CLU_108696_5_1_4"/>
<dbReference type="OrthoDB" id="9804551at2"/>
<dbReference type="UniPathway" id="UPA00094"/>
<dbReference type="GO" id="GO:0005829">
    <property type="term" value="C:cytosol"/>
    <property type="evidence" value="ECO:0007669"/>
    <property type="project" value="TreeGrafter"/>
</dbReference>
<dbReference type="GO" id="GO:0016020">
    <property type="term" value="C:membrane"/>
    <property type="evidence" value="ECO:0007669"/>
    <property type="project" value="GOC"/>
</dbReference>
<dbReference type="GO" id="GO:0000035">
    <property type="term" value="F:acyl binding"/>
    <property type="evidence" value="ECO:0007669"/>
    <property type="project" value="TreeGrafter"/>
</dbReference>
<dbReference type="GO" id="GO:0000036">
    <property type="term" value="F:acyl carrier activity"/>
    <property type="evidence" value="ECO:0007669"/>
    <property type="project" value="UniProtKB-UniRule"/>
</dbReference>
<dbReference type="GO" id="GO:0031177">
    <property type="term" value="F:phosphopantetheine binding"/>
    <property type="evidence" value="ECO:0007669"/>
    <property type="project" value="InterPro"/>
</dbReference>
<dbReference type="GO" id="GO:0009245">
    <property type="term" value="P:lipid A biosynthetic process"/>
    <property type="evidence" value="ECO:0007669"/>
    <property type="project" value="TreeGrafter"/>
</dbReference>
<dbReference type="FunFam" id="1.10.1200.10:FF:000001">
    <property type="entry name" value="Acyl carrier protein"/>
    <property type="match status" value="1"/>
</dbReference>
<dbReference type="Gene3D" id="1.10.1200.10">
    <property type="entry name" value="ACP-like"/>
    <property type="match status" value="1"/>
</dbReference>
<dbReference type="HAMAP" id="MF_01217">
    <property type="entry name" value="Acyl_carrier"/>
    <property type="match status" value="1"/>
</dbReference>
<dbReference type="InterPro" id="IPR003231">
    <property type="entry name" value="ACP"/>
</dbReference>
<dbReference type="InterPro" id="IPR036736">
    <property type="entry name" value="ACP-like_sf"/>
</dbReference>
<dbReference type="InterPro" id="IPR020806">
    <property type="entry name" value="PKS_PP-bd"/>
</dbReference>
<dbReference type="InterPro" id="IPR009081">
    <property type="entry name" value="PP-bd_ACP"/>
</dbReference>
<dbReference type="InterPro" id="IPR006162">
    <property type="entry name" value="Ppantetheine_attach_site"/>
</dbReference>
<dbReference type="NCBIfam" id="TIGR00517">
    <property type="entry name" value="acyl_carrier"/>
    <property type="match status" value="1"/>
</dbReference>
<dbReference type="NCBIfam" id="NF002148">
    <property type="entry name" value="PRK00982.1-2"/>
    <property type="match status" value="1"/>
</dbReference>
<dbReference type="NCBIfam" id="NF002149">
    <property type="entry name" value="PRK00982.1-3"/>
    <property type="match status" value="1"/>
</dbReference>
<dbReference type="NCBIfam" id="NF002150">
    <property type="entry name" value="PRK00982.1-4"/>
    <property type="match status" value="1"/>
</dbReference>
<dbReference type="NCBIfam" id="NF002151">
    <property type="entry name" value="PRK00982.1-5"/>
    <property type="match status" value="1"/>
</dbReference>
<dbReference type="PANTHER" id="PTHR20863">
    <property type="entry name" value="ACYL CARRIER PROTEIN"/>
    <property type="match status" value="1"/>
</dbReference>
<dbReference type="PANTHER" id="PTHR20863:SF76">
    <property type="entry name" value="CARRIER DOMAIN-CONTAINING PROTEIN"/>
    <property type="match status" value="1"/>
</dbReference>
<dbReference type="Pfam" id="PF00550">
    <property type="entry name" value="PP-binding"/>
    <property type="match status" value="1"/>
</dbReference>
<dbReference type="SMART" id="SM00823">
    <property type="entry name" value="PKS_PP"/>
    <property type="match status" value="1"/>
</dbReference>
<dbReference type="SUPFAM" id="SSF47336">
    <property type="entry name" value="ACP-like"/>
    <property type="match status" value="1"/>
</dbReference>
<dbReference type="PROSITE" id="PS50075">
    <property type="entry name" value="CARRIER"/>
    <property type="match status" value="1"/>
</dbReference>
<dbReference type="PROSITE" id="PS00012">
    <property type="entry name" value="PHOSPHOPANTETHEINE"/>
    <property type="match status" value="1"/>
</dbReference>
<comment type="function">
    <text evidence="1">Carrier of the growing fatty acid chain in fatty acid biosynthesis.</text>
</comment>
<comment type="pathway">
    <text evidence="1">Lipid metabolism; fatty acid biosynthesis.</text>
</comment>
<comment type="subcellular location">
    <subcellularLocation>
        <location evidence="1">Cytoplasm</location>
    </subcellularLocation>
</comment>
<comment type="PTM">
    <text evidence="1">4'-phosphopantetheine is transferred from CoA to a specific serine of apo-ACP by AcpS. This modification is essential for activity because fatty acids are bound in thioester linkage to the sulfhydryl of the prosthetic group.</text>
</comment>
<comment type="similarity">
    <text evidence="1">Belongs to the acyl carrier protein (ACP) family.</text>
</comment>
<feature type="chain" id="PRO_1000213921" description="Acyl carrier protein">
    <location>
        <begin position="1"/>
        <end position="79"/>
    </location>
</feature>
<feature type="domain" description="Carrier" evidence="2">
    <location>
        <begin position="2"/>
        <end position="77"/>
    </location>
</feature>
<feature type="modified residue" description="O-(pantetheine 4'-phosphoryl)serine" evidence="2">
    <location>
        <position position="37"/>
    </location>
</feature>
<keyword id="KW-0963">Cytoplasm</keyword>
<keyword id="KW-0275">Fatty acid biosynthesis</keyword>
<keyword id="KW-0276">Fatty acid metabolism</keyword>
<keyword id="KW-0444">Lipid biosynthesis</keyword>
<keyword id="KW-0443">Lipid metabolism</keyword>
<keyword id="KW-0596">Phosphopantetheine</keyword>
<keyword id="KW-0597">Phosphoprotein</keyword>
<name>ACP_VARPS</name>
<evidence type="ECO:0000255" key="1">
    <source>
        <dbReference type="HAMAP-Rule" id="MF_01217"/>
    </source>
</evidence>
<evidence type="ECO:0000255" key="2">
    <source>
        <dbReference type="PROSITE-ProRule" id="PRU00258"/>
    </source>
</evidence>